<sequence length="302" mass="33685">MATVANFLAKPISTVVPRPSSAVASTSSFVFFNHKTNPLFRRKNLPKRLFSAVKIKAGAASPGKVGTPPANDEKVQKIHSGEEFDVALKNAKSKLVVAEFATSKSDQSNKIYPFMVELSRTCNDVVFLLVMGDESDKTRELCRREKIEKVPHFSFYKSMEKIHEEEGIEPDQLMGDVLYYGDNHSAVVQLHGRPDVEKLIDENRTGGKLIVLDVGLKHCGPCVKVYPTVLKLSRSMSETVVFARMNGDENDSCMEFLKDMNVIEVPTFLFIRDGEIRGRYVGSGKGELIGEILRYSGVRVTY</sequence>
<accession>Q9SGS4</accession>
<accession>Q8LDJ9</accession>
<accession>Q95GH8</accession>
<name>CDSP_ARATH</name>
<proteinExistence type="evidence at protein level"/>
<reference key="1">
    <citation type="journal article" date="2002" name="Plant Cell">
        <title>The plastidic 2-cysteine peroxiredoxin is a target for a thioredoxin involved in the protection of the photosynthetic apparatus against oxidative damage.</title>
        <authorList>
            <person name="Broin M."/>
            <person name="Cuine S."/>
            <person name="Eymery F."/>
            <person name="Rey P."/>
        </authorList>
    </citation>
    <scope>NUCLEOTIDE SEQUENCE [MRNA]</scope>
    <scope>SUBCELLULAR LOCATION</scope>
    <scope>INDUCTION</scope>
    <scope>INTERACTION WITH BAS1</scope>
</reference>
<reference key="2">
    <citation type="journal article" date="2000" name="Nature">
        <title>Sequence and analysis of chromosome 1 of the plant Arabidopsis thaliana.</title>
        <authorList>
            <person name="Theologis A."/>
            <person name="Ecker J.R."/>
            <person name="Palm C.J."/>
            <person name="Federspiel N.A."/>
            <person name="Kaul S."/>
            <person name="White O."/>
            <person name="Alonso J."/>
            <person name="Altafi H."/>
            <person name="Araujo R."/>
            <person name="Bowman C.L."/>
            <person name="Brooks S.Y."/>
            <person name="Buehler E."/>
            <person name="Chan A."/>
            <person name="Chao Q."/>
            <person name="Chen H."/>
            <person name="Cheuk R.F."/>
            <person name="Chin C.W."/>
            <person name="Chung M.K."/>
            <person name="Conn L."/>
            <person name="Conway A.B."/>
            <person name="Conway A.R."/>
            <person name="Creasy T.H."/>
            <person name="Dewar K."/>
            <person name="Dunn P."/>
            <person name="Etgu P."/>
            <person name="Feldblyum T.V."/>
            <person name="Feng J.-D."/>
            <person name="Fong B."/>
            <person name="Fujii C.Y."/>
            <person name="Gill J.E."/>
            <person name="Goldsmith A.D."/>
            <person name="Haas B."/>
            <person name="Hansen N.F."/>
            <person name="Hughes B."/>
            <person name="Huizar L."/>
            <person name="Hunter J.L."/>
            <person name="Jenkins J."/>
            <person name="Johnson-Hopson C."/>
            <person name="Khan S."/>
            <person name="Khaykin E."/>
            <person name="Kim C.J."/>
            <person name="Koo H.L."/>
            <person name="Kremenetskaia I."/>
            <person name="Kurtz D.B."/>
            <person name="Kwan A."/>
            <person name="Lam B."/>
            <person name="Langin-Hooper S."/>
            <person name="Lee A."/>
            <person name="Lee J.M."/>
            <person name="Lenz C.A."/>
            <person name="Li J.H."/>
            <person name="Li Y.-P."/>
            <person name="Lin X."/>
            <person name="Liu S.X."/>
            <person name="Liu Z.A."/>
            <person name="Luros J.S."/>
            <person name="Maiti R."/>
            <person name="Marziali A."/>
            <person name="Militscher J."/>
            <person name="Miranda M."/>
            <person name="Nguyen M."/>
            <person name="Nierman W.C."/>
            <person name="Osborne B.I."/>
            <person name="Pai G."/>
            <person name="Peterson J."/>
            <person name="Pham P.K."/>
            <person name="Rizzo M."/>
            <person name="Rooney T."/>
            <person name="Rowley D."/>
            <person name="Sakano H."/>
            <person name="Salzberg S.L."/>
            <person name="Schwartz J.R."/>
            <person name="Shinn P."/>
            <person name="Southwick A.M."/>
            <person name="Sun H."/>
            <person name="Tallon L.J."/>
            <person name="Tambunga G."/>
            <person name="Toriumi M.J."/>
            <person name="Town C.D."/>
            <person name="Utterback T."/>
            <person name="Van Aken S."/>
            <person name="Vaysberg M."/>
            <person name="Vysotskaia V.S."/>
            <person name="Walker M."/>
            <person name="Wu D."/>
            <person name="Yu G."/>
            <person name="Fraser C.M."/>
            <person name="Venter J.C."/>
            <person name="Davis R.W."/>
        </authorList>
    </citation>
    <scope>NUCLEOTIDE SEQUENCE [LARGE SCALE GENOMIC DNA]</scope>
    <source>
        <strain>cv. Columbia</strain>
    </source>
</reference>
<reference key="3">
    <citation type="journal article" date="2017" name="Plant J.">
        <title>Araport11: a complete reannotation of the Arabidopsis thaliana reference genome.</title>
        <authorList>
            <person name="Cheng C.Y."/>
            <person name="Krishnakumar V."/>
            <person name="Chan A.P."/>
            <person name="Thibaud-Nissen F."/>
            <person name="Schobel S."/>
            <person name="Town C.D."/>
        </authorList>
    </citation>
    <scope>GENOME REANNOTATION</scope>
    <source>
        <strain>cv. Columbia</strain>
    </source>
</reference>
<reference key="4">
    <citation type="submission" date="2006-03" db="EMBL/GenBank/DDBJ databases">
        <title>Arabidopsis ORF clones.</title>
        <authorList>
            <person name="Kim C.J."/>
            <person name="Chen H."/>
            <person name="Shinn P."/>
            <person name="Ecker J.R."/>
        </authorList>
    </citation>
    <scope>NUCLEOTIDE SEQUENCE [LARGE SCALE MRNA]</scope>
    <source>
        <strain>cv. Columbia</strain>
    </source>
</reference>
<reference key="5">
    <citation type="submission" date="2002-03" db="EMBL/GenBank/DDBJ databases">
        <title>Full-length cDNA from Arabidopsis thaliana.</title>
        <authorList>
            <person name="Brover V.V."/>
            <person name="Troukhan M.E."/>
            <person name="Alexandrov N.A."/>
            <person name="Lu Y.-P."/>
            <person name="Flavell R.B."/>
            <person name="Feldmann K.A."/>
        </authorList>
    </citation>
    <scope>NUCLEOTIDE SEQUENCE [LARGE SCALE MRNA]</scope>
</reference>
<reference key="6">
    <citation type="journal article" date="2009" name="Mol. Plant">
        <title>Comparative genomic study of the thioredoxin family in photosynthetic organisms with emphasis on Populus trichocarpa.</title>
        <authorList>
            <person name="Chibani K."/>
            <person name="Wingsle G."/>
            <person name="Jacquot J.P."/>
            <person name="Gelhaye E."/>
            <person name="Rouhier N."/>
        </authorList>
    </citation>
    <scope>GENE FAMILY</scope>
    <scope>NOMENCLATURE</scope>
</reference>
<reference key="7">
    <citation type="journal article" date="2009" name="Plant Mol. Biol.">
        <title>A novel extended family of stromal thioredoxins.</title>
        <authorList>
            <person name="Cain P."/>
            <person name="Hall M."/>
            <person name="Schroder W.P."/>
            <person name="Kieselbach T."/>
            <person name="Robinson C."/>
        </authorList>
    </citation>
    <scope>SUBCELLULAR LOCATION</scope>
</reference>
<reference key="8">
    <citation type="journal article" date="2010" name="J. Biol. Chem.">
        <title>Plant thioredoxin CDSP32 regenerates 1-Cys methionine sulfoxide reductase B activity through the direct reduction of sulfenic acid.</title>
        <authorList>
            <person name="Tarrago L."/>
            <person name="Laugier E."/>
            <person name="Zaffagnini M."/>
            <person name="Marchand C.H."/>
            <person name="Le Marechal P."/>
            <person name="Lemaire S.D."/>
            <person name="Rey P."/>
        </authorList>
    </citation>
    <scope>FUNCTION</scope>
</reference>
<comment type="function">
    <text evidence="5">Probable thiol-disulfide oxidoreductase involved in resistance to oxidative stress. May participate in the reduction of alkyl hydroperoxides derived from oxidative stress by acting as a physiological electron donor to the BAS1 peroxiredoxin. May regenerate methionine sulfoxide reductase B1 (MSRB1) activity through sulfenic acid reduction.</text>
</comment>
<comment type="subunit">
    <text evidence="3">Interacts with the plastidial peroxiredoxin BAS1.</text>
</comment>
<comment type="interaction">
    <interactant intactId="EBI-25517863">
        <id>Q9SGS4</id>
    </interactant>
    <interactant intactId="EBI-540891">
        <id>Q8L765</id>
        <label>BPM1</label>
    </interactant>
    <organismsDiffer>false</organismsDiffer>
    <experiments>3</experiments>
</comment>
<comment type="interaction">
    <interactant intactId="EBI-25517863">
        <id>Q9SGS4</id>
    </interactant>
    <interactant intactId="EBI-4426649">
        <id>Q17TI5</id>
        <label>BRX</label>
    </interactant>
    <organismsDiffer>false</organismsDiffer>
    <experiments>3</experiments>
</comment>
<comment type="interaction">
    <interactant intactId="EBI-25517863">
        <id>Q9SGS4</id>
    </interactant>
    <interactant intactId="EBI-15192813">
        <id>Q9FDW1</id>
        <label>MYB44</label>
    </interactant>
    <organismsDiffer>false</organismsDiffer>
    <experiments>3</experiments>
</comment>
<comment type="subcellular location">
    <subcellularLocation>
        <location evidence="3 4">Plastid</location>
        <location evidence="3 4">Chloroplast stroma</location>
    </subcellularLocation>
</comment>
<comment type="induction">
    <text evidence="3">By drought stress and photooxidative conditions.</text>
</comment>
<comment type="similarity">
    <text evidence="6">Belongs to the thioredoxin family.</text>
</comment>
<feature type="transit peptide" description="Chloroplast" evidence="2">
    <location>
        <begin position="1"/>
        <end position="56"/>
    </location>
</feature>
<feature type="chain" id="PRO_0000394544" description="Thioredoxin-like protein CDSP32, chloroplastic">
    <location>
        <begin position="57"/>
        <end position="302"/>
    </location>
</feature>
<feature type="domain" description="Thioredoxin">
    <location>
        <begin position="163"/>
        <end position="298"/>
    </location>
</feature>
<feature type="active site" description="Nucleophile" evidence="1">
    <location>
        <position position="219"/>
    </location>
</feature>
<feature type="active site" description="Nucleophile" evidence="1">
    <location>
        <position position="222"/>
    </location>
</feature>
<feature type="site" description="Deprotonates C-terminal active site Cys" evidence="1">
    <location>
        <position position="213"/>
    </location>
</feature>
<feature type="site" description="Contributes to redox potential value" evidence="1">
    <location>
        <position position="220"/>
    </location>
</feature>
<feature type="site" description="Contributes to redox potential value" evidence="1">
    <location>
        <position position="221"/>
    </location>
</feature>
<feature type="disulfide bond" description="Redox-active" evidence="1">
    <location>
        <begin position="219"/>
        <end position="222"/>
    </location>
</feature>
<feature type="sequence conflict" description="In Ref. 5; AAM63182." evidence="6" ref="5">
    <original>V</original>
    <variation>E</variation>
    <location>
        <position position="86"/>
    </location>
</feature>
<feature type="sequence conflict" description="In Ref. 5; AAM63182." evidence="6" ref="5">
    <original>K</original>
    <variation>R</variation>
    <location>
        <position position="94"/>
    </location>
</feature>
<feature type="sequence conflict" description="In Ref. 5; AAM63182." evidence="6" ref="5">
    <original>A</original>
    <variation>T</variation>
    <location>
        <position position="186"/>
    </location>
</feature>
<organism>
    <name type="scientific">Arabidopsis thaliana</name>
    <name type="common">Mouse-ear cress</name>
    <dbReference type="NCBI Taxonomy" id="3702"/>
    <lineage>
        <taxon>Eukaryota</taxon>
        <taxon>Viridiplantae</taxon>
        <taxon>Streptophyta</taxon>
        <taxon>Embryophyta</taxon>
        <taxon>Tracheophyta</taxon>
        <taxon>Spermatophyta</taxon>
        <taxon>Magnoliopsida</taxon>
        <taxon>eudicotyledons</taxon>
        <taxon>Gunneridae</taxon>
        <taxon>Pentapetalae</taxon>
        <taxon>rosids</taxon>
        <taxon>malvids</taxon>
        <taxon>Brassicales</taxon>
        <taxon>Brassicaceae</taxon>
        <taxon>Camelineae</taxon>
        <taxon>Arabidopsis</taxon>
    </lineage>
</organism>
<gene>
    <name type="primary">CDSP32</name>
    <name type="ordered locus">At1g76080</name>
    <name type="ORF">T23E18.2</name>
</gene>
<dbReference type="EMBL" id="AJ318055">
    <property type="protein sequence ID" value="CAC39419.1"/>
    <property type="molecule type" value="mRNA"/>
</dbReference>
<dbReference type="EMBL" id="AC009978">
    <property type="protein sequence ID" value="AAF17651.1"/>
    <property type="molecule type" value="Genomic_DNA"/>
</dbReference>
<dbReference type="EMBL" id="CP002684">
    <property type="protein sequence ID" value="AEE35794.1"/>
    <property type="molecule type" value="Genomic_DNA"/>
</dbReference>
<dbReference type="EMBL" id="BT024860">
    <property type="protein sequence ID" value="ABD65591.1"/>
    <property type="molecule type" value="mRNA"/>
</dbReference>
<dbReference type="EMBL" id="AY085972">
    <property type="protein sequence ID" value="AAM63182.1"/>
    <property type="molecule type" value="mRNA"/>
</dbReference>
<dbReference type="PIR" id="A96789">
    <property type="entry name" value="A96789"/>
</dbReference>
<dbReference type="RefSeq" id="NP_177735.1">
    <property type="nucleotide sequence ID" value="NM_106257.3"/>
</dbReference>
<dbReference type="SMR" id="Q9SGS4"/>
<dbReference type="BioGRID" id="29159">
    <property type="interactions" value="4"/>
</dbReference>
<dbReference type="FunCoup" id="Q9SGS4">
    <property type="interactions" value="1284"/>
</dbReference>
<dbReference type="IntAct" id="Q9SGS4">
    <property type="interactions" value="3"/>
</dbReference>
<dbReference type="STRING" id="3702.Q9SGS4"/>
<dbReference type="iPTMnet" id="Q9SGS4"/>
<dbReference type="PaxDb" id="3702-AT1G76080.1"/>
<dbReference type="ProteomicsDB" id="220523"/>
<dbReference type="EnsemblPlants" id="AT1G76080.1">
    <property type="protein sequence ID" value="AT1G76080.1"/>
    <property type="gene ID" value="AT1G76080"/>
</dbReference>
<dbReference type="GeneID" id="843940"/>
<dbReference type="Gramene" id="AT1G76080.1">
    <property type="protein sequence ID" value="AT1G76080.1"/>
    <property type="gene ID" value="AT1G76080"/>
</dbReference>
<dbReference type="KEGG" id="ath:AT1G76080"/>
<dbReference type="Araport" id="AT1G76080"/>
<dbReference type="TAIR" id="AT1G76080">
    <property type="gene designation" value="CDSP32"/>
</dbReference>
<dbReference type="eggNOG" id="KOG0907">
    <property type="taxonomic scope" value="Eukaryota"/>
</dbReference>
<dbReference type="HOGENOM" id="CLU_064180_0_0_1"/>
<dbReference type="InParanoid" id="Q9SGS4"/>
<dbReference type="OMA" id="KVPHFTF"/>
<dbReference type="PhylomeDB" id="Q9SGS4"/>
<dbReference type="PRO" id="PR:Q9SGS4"/>
<dbReference type="Proteomes" id="UP000006548">
    <property type="component" value="Chromosome 1"/>
</dbReference>
<dbReference type="ExpressionAtlas" id="Q9SGS4">
    <property type="expression patterns" value="baseline and differential"/>
</dbReference>
<dbReference type="GO" id="GO:0009507">
    <property type="term" value="C:chloroplast"/>
    <property type="evidence" value="ECO:0007005"/>
    <property type="project" value="TAIR"/>
</dbReference>
<dbReference type="GO" id="GO:0009941">
    <property type="term" value="C:chloroplast envelope"/>
    <property type="evidence" value="ECO:0000314"/>
    <property type="project" value="TAIR"/>
</dbReference>
<dbReference type="GO" id="GO:0009570">
    <property type="term" value="C:chloroplast stroma"/>
    <property type="evidence" value="ECO:0000314"/>
    <property type="project" value="TAIR"/>
</dbReference>
<dbReference type="GO" id="GO:0005739">
    <property type="term" value="C:mitochondrion"/>
    <property type="evidence" value="ECO:0007005"/>
    <property type="project" value="TAIR"/>
</dbReference>
<dbReference type="GO" id="GO:0016671">
    <property type="term" value="F:oxidoreductase activity, acting on a sulfur group of donors, disulfide as acceptor"/>
    <property type="evidence" value="ECO:0007669"/>
    <property type="project" value="InterPro"/>
</dbReference>
<dbReference type="GO" id="GO:0045454">
    <property type="term" value="P:cell redox homeostasis"/>
    <property type="evidence" value="ECO:0000314"/>
    <property type="project" value="UniProtKB"/>
</dbReference>
<dbReference type="GO" id="GO:0042742">
    <property type="term" value="P:defense response to bacterium"/>
    <property type="evidence" value="ECO:0000315"/>
    <property type="project" value="TAIR"/>
</dbReference>
<dbReference type="GO" id="GO:0010286">
    <property type="term" value="P:heat acclimation"/>
    <property type="evidence" value="ECO:0000315"/>
    <property type="project" value="TAIR"/>
</dbReference>
<dbReference type="GO" id="GO:0006979">
    <property type="term" value="P:response to oxidative stress"/>
    <property type="evidence" value="ECO:0000304"/>
    <property type="project" value="UniProtKB"/>
</dbReference>
<dbReference type="GO" id="GO:0009414">
    <property type="term" value="P:response to water deprivation"/>
    <property type="evidence" value="ECO:0000304"/>
    <property type="project" value="UniProtKB"/>
</dbReference>
<dbReference type="CDD" id="cd02985">
    <property type="entry name" value="TRX_CDSP32"/>
    <property type="match status" value="2"/>
</dbReference>
<dbReference type="FunFam" id="3.40.30.10:FF:000281">
    <property type="entry name" value="Thioredoxin-like protein CDSP32, chloroplastic"/>
    <property type="match status" value="1"/>
</dbReference>
<dbReference type="FunFam" id="3.40.30.10:FF:000333">
    <property type="entry name" value="Thioredoxin-like protein CDSP32, chloroplastic"/>
    <property type="match status" value="1"/>
</dbReference>
<dbReference type="Gene3D" id="3.40.30.10">
    <property type="entry name" value="Glutaredoxin"/>
    <property type="match status" value="2"/>
</dbReference>
<dbReference type="InterPro" id="IPR044192">
    <property type="entry name" value="CDSP32"/>
</dbReference>
<dbReference type="InterPro" id="IPR036249">
    <property type="entry name" value="Thioredoxin-like_sf"/>
</dbReference>
<dbReference type="InterPro" id="IPR013766">
    <property type="entry name" value="Thioredoxin_domain"/>
</dbReference>
<dbReference type="PANTHER" id="PTHR47578">
    <property type="entry name" value="THIOREDOXIN-LIKE PROTEIN CDSP32, CHLOROPLASTIC"/>
    <property type="match status" value="1"/>
</dbReference>
<dbReference type="PANTHER" id="PTHR47578:SF1">
    <property type="entry name" value="THIOREDOXIN-LIKE PROTEIN CDSP32, CHLOROPLASTIC"/>
    <property type="match status" value="1"/>
</dbReference>
<dbReference type="Pfam" id="PF00085">
    <property type="entry name" value="Thioredoxin"/>
    <property type="match status" value="2"/>
</dbReference>
<dbReference type="SUPFAM" id="SSF52833">
    <property type="entry name" value="Thioredoxin-like"/>
    <property type="match status" value="2"/>
</dbReference>
<keyword id="KW-0150">Chloroplast</keyword>
<keyword id="KW-1015">Disulfide bond</keyword>
<keyword id="KW-0249">Electron transport</keyword>
<keyword id="KW-0934">Plastid</keyword>
<keyword id="KW-0676">Redox-active center</keyword>
<keyword id="KW-1185">Reference proteome</keyword>
<keyword id="KW-0809">Transit peptide</keyword>
<keyword id="KW-0813">Transport</keyword>
<protein>
    <recommendedName>
        <fullName>Thioredoxin-like protein CDSP32, chloroplastic</fullName>
    </recommendedName>
    <alternativeName>
        <fullName>Chloroplastic drought-induced stress protein of 32 KDa</fullName>
        <shortName>AtCDSP32</shortName>
    </alternativeName>
</protein>
<evidence type="ECO:0000250" key="1"/>
<evidence type="ECO:0000255" key="2"/>
<evidence type="ECO:0000269" key="3">
    <source>
    </source>
</evidence>
<evidence type="ECO:0000269" key="4">
    <source>
    </source>
</evidence>
<evidence type="ECO:0000269" key="5">
    <source>
    </source>
</evidence>
<evidence type="ECO:0000305" key="6"/>